<name>YCF34_PORPU</name>
<organism>
    <name type="scientific">Porphyra purpurea</name>
    <name type="common">Red seaweed</name>
    <name type="synonym">Ulva purpurea</name>
    <dbReference type="NCBI Taxonomy" id="2787"/>
    <lineage>
        <taxon>Eukaryota</taxon>
        <taxon>Rhodophyta</taxon>
        <taxon>Bangiophyceae</taxon>
        <taxon>Bangiales</taxon>
        <taxon>Bangiaceae</taxon>
        <taxon>Porphyra</taxon>
    </lineage>
</organism>
<feature type="chain" id="PRO_0000217346" description="Uncharacterized protein ycf34">
    <location>
        <begin position="1"/>
        <end position="76"/>
    </location>
</feature>
<comment type="subcellular location">
    <subcellularLocation>
        <location>Plastid</location>
        <location>Chloroplast</location>
    </subcellularLocation>
</comment>
<gene>
    <name type="primary">ycf34</name>
</gene>
<reference key="1">
    <citation type="journal article" date="1995" name="Plant Mol. Biol. Rep.">
        <title>Complete nucleotide sequence of the Porphyra purpurea chloroplast genome.</title>
        <authorList>
            <person name="Reith M.E."/>
            <person name="Munholland J."/>
        </authorList>
    </citation>
    <scope>NUCLEOTIDE SEQUENCE [LARGE SCALE GENOMIC DNA]</scope>
    <source>
        <strain>Avonport</strain>
    </source>
</reference>
<protein>
    <recommendedName>
        <fullName>Uncharacterized protein ycf34</fullName>
    </recommendedName>
</protein>
<proteinExistence type="predicted"/>
<geneLocation type="chloroplast"/>
<accession>P51229</accession>
<sequence>MCICINCNHIAECSTYHLIESRHKQVHINENPSFMPEFPVIHVNISSNSRINQIDWDLVECLSFVEKPNSWNLNNY</sequence>
<dbReference type="EMBL" id="U38804">
    <property type="protein sequence ID" value="AAC08115.1"/>
    <property type="molecule type" value="Genomic_DNA"/>
</dbReference>
<dbReference type="PIR" id="S73150">
    <property type="entry name" value="S73150"/>
</dbReference>
<dbReference type="RefSeq" id="NP_053839.1">
    <property type="nucleotide sequence ID" value="NC_000925.1"/>
</dbReference>
<dbReference type="GeneID" id="809857"/>
<dbReference type="GO" id="GO:0009507">
    <property type="term" value="C:chloroplast"/>
    <property type="evidence" value="ECO:0007669"/>
    <property type="project" value="UniProtKB-SubCell"/>
</dbReference>
<dbReference type="InterPro" id="IPR019656">
    <property type="entry name" value="Uncharacterised_Ycf34"/>
</dbReference>
<dbReference type="Pfam" id="PF10718">
    <property type="entry name" value="Ycf34"/>
    <property type="match status" value="1"/>
</dbReference>
<keyword id="KW-0150">Chloroplast</keyword>
<keyword id="KW-0934">Plastid</keyword>